<evidence type="ECO:0000255" key="1">
    <source>
        <dbReference type="HAMAP-Rule" id="MF_00645"/>
    </source>
</evidence>
<dbReference type="EMBL" id="CP001398">
    <property type="protein sequence ID" value="ACS33952.1"/>
    <property type="molecule type" value="Genomic_DNA"/>
</dbReference>
<dbReference type="RefSeq" id="WP_015859063.1">
    <property type="nucleotide sequence ID" value="NC_012804.1"/>
</dbReference>
<dbReference type="SMR" id="C5A6U0"/>
<dbReference type="STRING" id="593117.TGAM_1450"/>
<dbReference type="PaxDb" id="593117-TGAM_1450"/>
<dbReference type="GeneID" id="7988183"/>
<dbReference type="KEGG" id="tga:TGAM_1450"/>
<dbReference type="PATRIC" id="fig|593117.10.peg.1452"/>
<dbReference type="eggNOG" id="arCOG01336">
    <property type="taxonomic scope" value="Archaea"/>
</dbReference>
<dbReference type="HOGENOM" id="CLU_095686_1_1_2"/>
<dbReference type="OrthoDB" id="25187at2157"/>
<dbReference type="Proteomes" id="UP000001488">
    <property type="component" value="Chromosome"/>
</dbReference>
<dbReference type="Gene3D" id="3.30.700.20">
    <property type="entry name" value="Hypothetical protein ph0010, domain 1"/>
    <property type="match status" value="1"/>
</dbReference>
<dbReference type="Gene3D" id="3.30.1490.150">
    <property type="entry name" value="Hypothetical protein ph0010, domain 2"/>
    <property type="match status" value="1"/>
</dbReference>
<dbReference type="HAMAP" id="MF_00645">
    <property type="entry name" value="AMMECR1"/>
    <property type="match status" value="1"/>
</dbReference>
<dbReference type="InterPro" id="IPR023473">
    <property type="entry name" value="AMMECR1"/>
</dbReference>
<dbReference type="InterPro" id="IPR036071">
    <property type="entry name" value="AMMECR1_dom_sf"/>
</dbReference>
<dbReference type="InterPro" id="IPR002733">
    <property type="entry name" value="AMMECR1_domain"/>
</dbReference>
<dbReference type="InterPro" id="IPR027485">
    <property type="entry name" value="AMMECR1_N"/>
</dbReference>
<dbReference type="InterPro" id="IPR027623">
    <property type="entry name" value="AmmeMemoSam_A"/>
</dbReference>
<dbReference type="InterPro" id="IPR023472">
    <property type="entry name" value="Uncharacterised_MJ0810"/>
</dbReference>
<dbReference type="NCBIfam" id="TIGR04335">
    <property type="entry name" value="AmmeMemoSam_A"/>
    <property type="match status" value="1"/>
</dbReference>
<dbReference type="NCBIfam" id="NF002000">
    <property type="entry name" value="PRK00801.1"/>
    <property type="match status" value="1"/>
</dbReference>
<dbReference type="NCBIfam" id="TIGR00296">
    <property type="entry name" value="TIGR00296 family protein"/>
    <property type="match status" value="1"/>
</dbReference>
<dbReference type="PANTHER" id="PTHR13016:SF0">
    <property type="entry name" value="AMME SYNDROME CANDIDATE GENE 1 PROTEIN"/>
    <property type="match status" value="1"/>
</dbReference>
<dbReference type="PANTHER" id="PTHR13016">
    <property type="entry name" value="AMMECR1 HOMOLOG"/>
    <property type="match status" value="1"/>
</dbReference>
<dbReference type="Pfam" id="PF01871">
    <property type="entry name" value="AMMECR1"/>
    <property type="match status" value="1"/>
</dbReference>
<dbReference type="SUPFAM" id="SSF143447">
    <property type="entry name" value="AMMECR1-like"/>
    <property type="match status" value="1"/>
</dbReference>
<dbReference type="PROSITE" id="PS51112">
    <property type="entry name" value="AMMECR1"/>
    <property type="match status" value="1"/>
</dbReference>
<name>Y1450_THEGJ</name>
<accession>C5A6U0</accession>
<keyword id="KW-1185">Reference proteome</keyword>
<sequence length="205" mass="23632">MYRIKDEWGEFLVRLARKAIEEYVRNGRVIEPPEDTPPELWEKMGVFVTLNRYRAPPQMALRGCIGFPLPIYPLVEATIKAAIHAAVEDPRFPPVRPEELDELTVEVSVLTPPEPIEGPPEERPRKIKVGRDGLIVEKGFYSGLLLPQVPVEWGWDEEEFLAQTCWKAGLPPDCWLDPDTKVYRFTAEIFEEEYPRGPVRRKPLV</sequence>
<gene>
    <name type="ordered locus">TGAM_1450</name>
</gene>
<proteinExistence type="inferred from homology"/>
<feature type="chain" id="PRO_1000212385" description="Protein TGAM_1450">
    <location>
        <begin position="1"/>
        <end position="205"/>
    </location>
</feature>
<feature type="domain" description="AMMECR1" evidence="1">
    <location>
        <begin position="7"/>
        <end position="201"/>
    </location>
</feature>
<organism>
    <name type="scientific">Thermococcus gammatolerans (strain DSM 15229 / JCM 11827 / EJ3)</name>
    <dbReference type="NCBI Taxonomy" id="593117"/>
    <lineage>
        <taxon>Archaea</taxon>
        <taxon>Methanobacteriati</taxon>
        <taxon>Methanobacteriota</taxon>
        <taxon>Thermococci</taxon>
        <taxon>Thermococcales</taxon>
        <taxon>Thermococcaceae</taxon>
        <taxon>Thermococcus</taxon>
    </lineage>
</organism>
<reference key="1">
    <citation type="journal article" date="2007" name="Genome Biol.">
        <title>Genome analysis and genome-wide proteomics of Thermococcus gammatolerans, the most radioresistant organism known amongst the Archaea.</title>
        <authorList>
            <person name="Zivanovic Y."/>
            <person name="Armengaud J."/>
            <person name="Lagorce A."/>
            <person name="Leplat C."/>
            <person name="Guerin P."/>
            <person name="Dutertre M."/>
            <person name="Anthouard V."/>
            <person name="Forterre P."/>
            <person name="Wincker P."/>
            <person name="Confalonieri F."/>
        </authorList>
    </citation>
    <scope>NUCLEOTIDE SEQUENCE [LARGE SCALE GENOMIC DNA]</scope>
    <source>
        <strain>DSM 15229 / JCM 11827 / EJ3</strain>
    </source>
</reference>
<protein>
    <recommendedName>
        <fullName evidence="1">Protein TGAM_1450</fullName>
    </recommendedName>
</protein>